<proteinExistence type="inferred from homology"/>
<accession>A3NXU2</accession>
<dbReference type="EMBL" id="CP000572">
    <property type="protein sequence ID" value="ABN91677.1"/>
    <property type="molecule type" value="Genomic_DNA"/>
</dbReference>
<dbReference type="RefSeq" id="WP_004535713.1">
    <property type="nucleotide sequence ID" value="NC_009076.1"/>
</dbReference>
<dbReference type="SMR" id="A3NXU2"/>
<dbReference type="KEGG" id="bpl:BURPS1106A_2918"/>
<dbReference type="HOGENOM" id="CLU_077636_1_0_4"/>
<dbReference type="Proteomes" id="UP000006738">
    <property type="component" value="Chromosome I"/>
</dbReference>
<dbReference type="GO" id="GO:0005737">
    <property type="term" value="C:cytoplasm"/>
    <property type="evidence" value="ECO:0007669"/>
    <property type="project" value="UniProtKB-SubCell"/>
</dbReference>
<dbReference type="GO" id="GO:0005840">
    <property type="term" value="C:ribosome"/>
    <property type="evidence" value="ECO:0007669"/>
    <property type="project" value="InterPro"/>
</dbReference>
<dbReference type="GO" id="GO:0043022">
    <property type="term" value="F:ribosome binding"/>
    <property type="evidence" value="ECO:0007669"/>
    <property type="project" value="InterPro"/>
</dbReference>
<dbReference type="GO" id="GO:0042274">
    <property type="term" value="P:ribosomal small subunit biogenesis"/>
    <property type="evidence" value="ECO:0007669"/>
    <property type="project" value="UniProtKB-UniRule"/>
</dbReference>
<dbReference type="GO" id="GO:0006364">
    <property type="term" value="P:rRNA processing"/>
    <property type="evidence" value="ECO:0007669"/>
    <property type="project" value="UniProtKB-UniRule"/>
</dbReference>
<dbReference type="Gene3D" id="2.30.30.240">
    <property type="entry name" value="PRC-barrel domain"/>
    <property type="match status" value="1"/>
</dbReference>
<dbReference type="Gene3D" id="2.40.30.60">
    <property type="entry name" value="RimM"/>
    <property type="match status" value="1"/>
</dbReference>
<dbReference type="HAMAP" id="MF_00014">
    <property type="entry name" value="Ribosome_mat_RimM"/>
    <property type="match status" value="1"/>
</dbReference>
<dbReference type="InterPro" id="IPR011033">
    <property type="entry name" value="PRC_barrel-like_sf"/>
</dbReference>
<dbReference type="InterPro" id="IPR056792">
    <property type="entry name" value="PRC_RimM"/>
</dbReference>
<dbReference type="InterPro" id="IPR011961">
    <property type="entry name" value="RimM"/>
</dbReference>
<dbReference type="InterPro" id="IPR002676">
    <property type="entry name" value="RimM_N"/>
</dbReference>
<dbReference type="InterPro" id="IPR036976">
    <property type="entry name" value="RimM_N_sf"/>
</dbReference>
<dbReference type="InterPro" id="IPR009000">
    <property type="entry name" value="Transl_B-barrel_sf"/>
</dbReference>
<dbReference type="NCBIfam" id="TIGR02273">
    <property type="entry name" value="16S_RimM"/>
    <property type="match status" value="1"/>
</dbReference>
<dbReference type="PANTHER" id="PTHR33692">
    <property type="entry name" value="RIBOSOME MATURATION FACTOR RIMM"/>
    <property type="match status" value="1"/>
</dbReference>
<dbReference type="PANTHER" id="PTHR33692:SF1">
    <property type="entry name" value="RIBOSOME MATURATION FACTOR RIMM"/>
    <property type="match status" value="1"/>
</dbReference>
<dbReference type="Pfam" id="PF24986">
    <property type="entry name" value="PRC_RimM"/>
    <property type="match status" value="1"/>
</dbReference>
<dbReference type="Pfam" id="PF01782">
    <property type="entry name" value="RimM"/>
    <property type="match status" value="1"/>
</dbReference>
<dbReference type="SUPFAM" id="SSF50346">
    <property type="entry name" value="PRC-barrel domain"/>
    <property type="match status" value="1"/>
</dbReference>
<dbReference type="SUPFAM" id="SSF50447">
    <property type="entry name" value="Translation proteins"/>
    <property type="match status" value="1"/>
</dbReference>
<evidence type="ECO:0000255" key="1">
    <source>
        <dbReference type="HAMAP-Rule" id="MF_00014"/>
    </source>
</evidence>
<evidence type="ECO:0000256" key="2">
    <source>
        <dbReference type="SAM" id="MobiDB-lite"/>
    </source>
</evidence>
<comment type="function">
    <text evidence="1">An accessory protein needed during the final step in the assembly of 30S ribosomal subunit, possibly for assembly of the head region. Essential for efficient processing of 16S rRNA. May be needed both before and after RbfA during the maturation of 16S rRNA. It has affinity for free ribosomal 30S subunits but not for 70S ribosomes.</text>
</comment>
<comment type="subunit">
    <text evidence="1">Binds ribosomal protein uS19.</text>
</comment>
<comment type="subcellular location">
    <subcellularLocation>
        <location evidence="1">Cytoplasm</location>
    </subcellularLocation>
</comment>
<comment type="domain">
    <text evidence="1">The PRC barrel domain binds ribosomal protein uS19.</text>
</comment>
<comment type="similarity">
    <text evidence="1">Belongs to the RimM family.</text>
</comment>
<gene>
    <name evidence="1" type="primary">rimM</name>
    <name type="ordered locus">BURPS1106A_2918</name>
</gene>
<sequence>MAGHDSGNAKRGRSPSFGVFVRKPVERAPAKGASDGAVDSQAIRIDAAQSWPDDAVEVGAVVDAYGLKGWVKLAAHAGAGRGGDALLKARDWWLQKGAERKFARVTQAKLHGDTVVAHPGGSVDRDTALALRGARVFVRRGDFPALAADEFYWVDLIGLDVVNEAGVALGKIADMIDNGVHSIMRVEYPATGKDGRPKTGERLIPFVGVYVKAVEQAAGRVVVDWEADY</sequence>
<feature type="chain" id="PRO_0000351738" description="Ribosome maturation factor RimM">
    <location>
        <begin position="1"/>
        <end position="229"/>
    </location>
</feature>
<feature type="domain" description="PRC barrel" evidence="1">
    <location>
        <begin position="148"/>
        <end position="229"/>
    </location>
</feature>
<feature type="region of interest" description="Disordered" evidence="2">
    <location>
        <begin position="1"/>
        <end position="21"/>
    </location>
</feature>
<keyword id="KW-0143">Chaperone</keyword>
<keyword id="KW-0963">Cytoplasm</keyword>
<keyword id="KW-0690">Ribosome biogenesis</keyword>
<keyword id="KW-0698">rRNA processing</keyword>
<name>RIMM_BURP0</name>
<protein>
    <recommendedName>
        <fullName evidence="1">Ribosome maturation factor RimM</fullName>
    </recommendedName>
</protein>
<reference key="1">
    <citation type="journal article" date="2010" name="Genome Biol. Evol.">
        <title>Continuing evolution of Burkholderia mallei through genome reduction and large-scale rearrangements.</title>
        <authorList>
            <person name="Losada L."/>
            <person name="Ronning C.M."/>
            <person name="DeShazer D."/>
            <person name="Woods D."/>
            <person name="Fedorova N."/>
            <person name="Kim H.S."/>
            <person name="Shabalina S.A."/>
            <person name="Pearson T.R."/>
            <person name="Brinkac L."/>
            <person name="Tan P."/>
            <person name="Nandi T."/>
            <person name="Crabtree J."/>
            <person name="Badger J."/>
            <person name="Beckstrom-Sternberg S."/>
            <person name="Saqib M."/>
            <person name="Schutzer S.E."/>
            <person name="Keim P."/>
            <person name="Nierman W.C."/>
        </authorList>
    </citation>
    <scope>NUCLEOTIDE SEQUENCE [LARGE SCALE GENOMIC DNA]</scope>
    <source>
        <strain>1106a</strain>
    </source>
</reference>
<organism>
    <name type="scientific">Burkholderia pseudomallei (strain 1106a)</name>
    <dbReference type="NCBI Taxonomy" id="357348"/>
    <lineage>
        <taxon>Bacteria</taxon>
        <taxon>Pseudomonadati</taxon>
        <taxon>Pseudomonadota</taxon>
        <taxon>Betaproteobacteria</taxon>
        <taxon>Burkholderiales</taxon>
        <taxon>Burkholderiaceae</taxon>
        <taxon>Burkholderia</taxon>
        <taxon>pseudomallei group</taxon>
    </lineage>
</organism>